<dbReference type="EMBL" id="CP001037">
    <property type="protein sequence ID" value="ACC83282.1"/>
    <property type="molecule type" value="Genomic_DNA"/>
</dbReference>
<dbReference type="RefSeq" id="WP_010997578.1">
    <property type="nucleotide sequence ID" value="NC_010628.1"/>
</dbReference>
<dbReference type="SMR" id="B2J0D0"/>
<dbReference type="STRING" id="63737.Npun_R4937"/>
<dbReference type="EnsemblBacteria" id="ACC83282">
    <property type="protein sequence ID" value="ACC83282"/>
    <property type="gene ID" value="Npun_R4937"/>
</dbReference>
<dbReference type="KEGG" id="npu:Npun_R4937"/>
<dbReference type="eggNOG" id="COG0292">
    <property type="taxonomic scope" value="Bacteria"/>
</dbReference>
<dbReference type="HOGENOM" id="CLU_123265_0_1_3"/>
<dbReference type="OrthoDB" id="9808966at2"/>
<dbReference type="PhylomeDB" id="B2J0D0"/>
<dbReference type="Proteomes" id="UP000001191">
    <property type="component" value="Chromosome"/>
</dbReference>
<dbReference type="GO" id="GO:1990904">
    <property type="term" value="C:ribonucleoprotein complex"/>
    <property type="evidence" value="ECO:0007669"/>
    <property type="project" value="UniProtKB-KW"/>
</dbReference>
<dbReference type="GO" id="GO:0005840">
    <property type="term" value="C:ribosome"/>
    <property type="evidence" value="ECO:0007669"/>
    <property type="project" value="UniProtKB-KW"/>
</dbReference>
<dbReference type="GO" id="GO:0019843">
    <property type="term" value="F:rRNA binding"/>
    <property type="evidence" value="ECO:0007669"/>
    <property type="project" value="UniProtKB-UniRule"/>
</dbReference>
<dbReference type="GO" id="GO:0003735">
    <property type="term" value="F:structural constituent of ribosome"/>
    <property type="evidence" value="ECO:0007669"/>
    <property type="project" value="InterPro"/>
</dbReference>
<dbReference type="GO" id="GO:0000027">
    <property type="term" value="P:ribosomal large subunit assembly"/>
    <property type="evidence" value="ECO:0007669"/>
    <property type="project" value="UniProtKB-UniRule"/>
</dbReference>
<dbReference type="GO" id="GO:0006412">
    <property type="term" value="P:translation"/>
    <property type="evidence" value="ECO:0007669"/>
    <property type="project" value="InterPro"/>
</dbReference>
<dbReference type="CDD" id="cd07026">
    <property type="entry name" value="Ribosomal_L20"/>
    <property type="match status" value="1"/>
</dbReference>
<dbReference type="FunFam" id="1.10.1900.20:FF:000001">
    <property type="entry name" value="50S ribosomal protein L20"/>
    <property type="match status" value="1"/>
</dbReference>
<dbReference type="Gene3D" id="6.10.160.10">
    <property type="match status" value="1"/>
</dbReference>
<dbReference type="Gene3D" id="1.10.1900.20">
    <property type="entry name" value="Ribosomal protein L20"/>
    <property type="match status" value="1"/>
</dbReference>
<dbReference type="HAMAP" id="MF_00382">
    <property type="entry name" value="Ribosomal_bL20"/>
    <property type="match status" value="1"/>
</dbReference>
<dbReference type="InterPro" id="IPR005813">
    <property type="entry name" value="Ribosomal_bL20"/>
</dbReference>
<dbReference type="InterPro" id="IPR049946">
    <property type="entry name" value="RIBOSOMAL_L20_CS"/>
</dbReference>
<dbReference type="InterPro" id="IPR035566">
    <property type="entry name" value="Ribosomal_protein_bL20_C"/>
</dbReference>
<dbReference type="NCBIfam" id="TIGR01032">
    <property type="entry name" value="rplT_bact"/>
    <property type="match status" value="1"/>
</dbReference>
<dbReference type="PANTHER" id="PTHR10986">
    <property type="entry name" value="39S RIBOSOMAL PROTEIN L20"/>
    <property type="match status" value="1"/>
</dbReference>
<dbReference type="Pfam" id="PF00453">
    <property type="entry name" value="Ribosomal_L20"/>
    <property type="match status" value="1"/>
</dbReference>
<dbReference type="PRINTS" id="PR00062">
    <property type="entry name" value="RIBOSOMALL20"/>
</dbReference>
<dbReference type="SUPFAM" id="SSF74731">
    <property type="entry name" value="Ribosomal protein L20"/>
    <property type="match status" value="1"/>
</dbReference>
<dbReference type="PROSITE" id="PS00937">
    <property type="entry name" value="RIBOSOMAL_L20"/>
    <property type="match status" value="1"/>
</dbReference>
<feature type="chain" id="PRO_1000122346" description="Large ribosomal subunit protein bL20">
    <location>
        <begin position="1"/>
        <end position="118"/>
    </location>
</feature>
<protein>
    <recommendedName>
        <fullName evidence="1">Large ribosomal subunit protein bL20</fullName>
    </recommendedName>
    <alternativeName>
        <fullName evidence="2">50S ribosomal protein L20</fullName>
    </alternativeName>
</protein>
<organism>
    <name type="scientific">Nostoc punctiforme (strain ATCC 29133 / PCC 73102)</name>
    <dbReference type="NCBI Taxonomy" id="63737"/>
    <lineage>
        <taxon>Bacteria</taxon>
        <taxon>Bacillati</taxon>
        <taxon>Cyanobacteriota</taxon>
        <taxon>Cyanophyceae</taxon>
        <taxon>Nostocales</taxon>
        <taxon>Nostocaceae</taxon>
        <taxon>Nostoc</taxon>
    </lineage>
</organism>
<reference key="1">
    <citation type="journal article" date="2013" name="Plant Physiol.">
        <title>A Nostoc punctiforme Sugar Transporter Necessary to Establish a Cyanobacterium-Plant Symbiosis.</title>
        <authorList>
            <person name="Ekman M."/>
            <person name="Picossi S."/>
            <person name="Campbell E.L."/>
            <person name="Meeks J.C."/>
            <person name="Flores E."/>
        </authorList>
    </citation>
    <scope>NUCLEOTIDE SEQUENCE [LARGE SCALE GENOMIC DNA]</scope>
    <source>
        <strain>ATCC 29133 / PCC 73102</strain>
    </source>
</reference>
<evidence type="ECO:0000255" key="1">
    <source>
        <dbReference type="HAMAP-Rule" id="MF_00382"/>
    </source>
</evidence>
<evidence type="ECO:0000305" key="2"/>
<proteinExistence type="inferred from homology"/>
<gene>
    <name evidence="1" type="primary">rplT</name>
    <name evidence="1" type="synonym">rpl20</name>
    <name type="ordered locus">Npun_R4937</name>
</gene>
<keyword id="KW-1185">Reference proteome</keyword>
<keyword id="KW-0687">Ribonucleoprotein</keyword>
<keyword id="KW-0689">Ribosomal protein</keyword>
<keyword id="KW-0694">RNA-binding</keyword>
<keyword id="KW-0699">rRNA-binding</keyword>
<comment type="function">
    <text evidence="1">Binds directly to 23S ribosomal RNA and is necessary for the in vitro assembly process of the 50S ribosomal subunit. It is not involved in the protein synthesizing functions of that subunit.</text>
</comment>
<comment type="similarity">
    <text evidence="1">Belongs to the bacterial ribosomal protein bL20 family.</text>
</comment>
<sequence>MTRVKRGNVARKRRNKILKLAKGFRGSHSTLFRTANQQVMKALRSAYRDRKKKKRDFRRLWITRINAASRQHGLSYSQLIGNLKKADIQLNRKMLAQLAVLDPASFGKVAELASQAKG</sequence>
<accession>B2J0D0</accession>
<name>RL20_NOSP7</name>